<comment type="function">
    <text evidence="1">Sulfur carrier protein which probably makes part of a sulfur-relay system.</text>
</comment>
<comment type="subcellular location">
    <subcellularLocation>
        <location evidence="1">Cytoplasm</location>
    </subcellularLocation>
</comment>
<comment type="similarity">
    <text evidence="1">Belongs to the sulfur carrier protein TusA family.</text>
</comment>
<reference key="1">
    <citation type="submission" date="2009-02" db="EMBL/GenBank/DDBJ databases">
        <title>Vibrio splendidus str. LGP32 complete genome.</title>
        <authorList>
            <person name="Mazel D."/>
            <person name="Le Roux F."/>
        </authorList>
    </citation>
    <scope>NUCLEOTIDE SEQUENCE [LARGE SCALE GENOMIC DNA]</scope>
    <source>
        <strain>LGP32</strain>
    </source>
</reference>
<sequence>MTFKPELATHTLEAEGLRCPEPVMMVRKTIRNMQDGDVLLVKADDPSTTRDIPSFCRFMDHQLVGQATETLPYQYLIRKGLEA</sequence>
<name>TUSA_VIBA3</name>
<protein>
    <recommendedName>
        <fullName evidence="1">Sulfur carrier protein TusA</fullName>
    </recommendedName>
</protein>
<proteinExistence type="inferred from homology"/>
<dbReference type="EMBL" id="FM954972">
    <property type="protein sequence ID" value="CAV17093.1"/>
    <property type="molecule type" value="Genomic_DNA"/>
</dbReference>
<dbReference type="SMR" id="B7VGL0"/>
<dbReference type="STRING" id="575788.VS_0037"/>
<dbReference type="KEGG" id="vsp:VS_0037"/>
<dbReference type="eggNOG" id="COG0425">
    <property type="taxonomic scope" value="Bacteria"/>
</dbReference>
<dbReference type="HOGENOM" id="CLU_165255_5_1_6"/>
<dbReference type="Proteomes" id="UP000009100">
    <property type="component" value="Chromosome 1"/>
</dbReference>
<dbReference type="GO" id="GO:0005737">
    <property type="term" value="C:cytoplasm"/>
    <property type="evidence" value="ECO:0007669"/>
    <property type="project" value="UniProtKB-SubCell"/>
</dbReference>
<dbReference type="GO" id="GO:0097163">
    <property type="term" value="F:sulfur carrier activity"/>
    <property type="evidence" value="ECO:0007669"/>
    <property type="project" value="UniProtKB-UniRule"/>
</dbReference>
<dbReference type="GO" id="GO:0002143">
    <property type="term" value="P:tRNA wobble position uridine thiolation"/>
    <property type="evidence" value="ECO:0007669"/>
    <property type="project" value="InterPro"/>
</dbReference>
<dbReference type="CDD" id="cd03423">
    <property type="entry name" value="SirA"/>
    <property type="match status" value="1"/>
</dbReference>
<dbReference type="Gene3D" id="3.30.110.40">
    <property type="entry name" value="TusA-like domain"/>
    <property type="match status" value="1"/>
</dbReference>
<dbReference type="HAMAP" id="MF_00413">
    <property type="entry name" value="Thiourid_synth_A"/>
    <property type="match status" value="1"/>
</dbReference>
<dbReference type="InterPro" id="IPR022931">
    <property type="entry name" value="Sulphur_carrier_TusA"/>
</dbReference>
<dbReference type="InterPro" id="IPR001455">
    <property type="entry name" value="TusA-like"/>
</dbReference>
<dbReference type="InterPro" id="IPR036868">
    <property type="entry name" value="TusA-like_sf"/>
</dbReference>
<dbReference type="NCBIfam" id="NF001423">
    <property type="entry name" value="PRK00299.1"/>
    <property type="match status" value="1"/>
</dbReference>
<dbReference type="PANTHER" id="PTHR33279:SF2">
    <property type="entry name" value="SULFUR CARRIER PROTEIN TUSA"/>
    <property type="match status" value="1"/>
</dbReference>
<dbReference type="PANTHER" id="PTHR33279">
    <property type="entry name" value="SULFUR CARRIER PROTEIN YEDF-RELATED"/>
    <property type="match status" value="1"/>
</dbReference>
<dbReference type="Pfam" id="PF01206">
    <property type="entry name" value="TusA"/>
    <property type="match status" value="1"/>
</dbReference>
<dbReference type="SUPFAM" id="SSF64307">
    <property type="entry name" value="SirA-like"/>
    <property type="match status" value="1"/>
</dbReference>
<dbReference type="PROSITE" id="PS01148">
    <property type="entry name" value="UPF0033"/>
    <property type="match status" value="1"/>
</dbReference>
<evidence type="ECO:0000255" key="1">
    <source>
        <dbReference type="HAMAP-Rule" id="MF_00413"/>
    </source>
</evidence>
<gene>
    <name evidence="1" type="primary">tusA</name>
    <name type="ordered locus">VS_0037</name>
</gene>
<accession>B7VGL0</accession>
<keyword id="KW-0963">Cytoplasm</keyword>
<feature type="chain" id="PRO_1000199937" description="Sulfur carrier protein TusA">
    <location>
        <begin position="1"/>
        <end position="83"/>
    </location>
</feature>
<feature type="active site" description="Cysteine persulfide intermediate" evidence="1">
    <location>
        <position position="19"/>
    </location>
</feature>
<organism>
    <name type="scientific">Vibrio atlanticus (strain LGP32)</name>
    <name type="common">Vibrio splendidus (strain Mel32)</name>
    <dbReference type="NCBI Taxonomy" id="575788"/>
    <lineage>
        <taxon>Bacteria</taxon>
        <taxon>Pseudomonadati</taxon>
        <taxon>Pseudomonadota</taxon>
        <taxon>Gammaproteobacteria</taxon>
        <taxon>Vibrionales</taxon>
        <taxon>Vibrionaceae</taxon>
        <taxon>Vibrio</taxon>
    </lineage>
</organism>